<gene>
    <name evidence="1" type="primary">thrS</name>
    <name type="ordered locus">PputW619_1967</name>
</gene>
<reference key="1">
    <citation type="submission" date="2008-02" db="EMBL/GenBank/DDBJ databases">
        <title>Complete sequence of Pseudomonas putida W619.</title>
        <authorList>
            <person name="Copeland A."/>
            <person name="Lucas S."/>
            <person name="Lapidus A."/>
            <person name="Barry K."/>
            <person name="Detter J.C."/>
            <person name="Glavina del Rio T."/>
            <person name="Dalin E."/>
            <person name="Tice H."/>
            <person name="Pitluck S."/>
            <person name="Chain P."/>
            <person name="Malfatti S."/>
            <person name="Shin M."/>
            <person name="Vergez L."/>
            <person name="Schmutz J."/>
            <person name="Larimer F."/>
            <person name="Land M."/>
            <person name="Hauser L."/>
            <person name="Kyrpides N."/>
            <person name="Kim E."/>
            <person name="Taghavi S."/>
            <person name="Vangronsveld D."/>
            <person name="van der Lelie D."/>
            <person name="Richardson P."/>
        </authorList>
    </citation>
    <scope>NUCLEOTIDE SEQUENCE [LARGE SCALE GENOMIC DNA]</scope>
    <source>
        <strain>W619</strain>
    </source>
</reference>
<sequence length="640" mass="72710">MPTITLPDGSQRAFDHAVSVADVAASIGAGLAKATVAGKVDGKLVDACELITHDATLQIITPKDEEGLEIIRHSCAHLVGHAVKQLYPTAKMVIGPVIDEGFYYDIAYERSFTPEDLAAIEKRMQQLIEKDYDVIKKMTPRAEVIDVFKARGEDYKLRLVEDMPDEQAMGLYYHEEYVDMCRGPHVPNTRFLKAFKLTKLSGAYWRGDAKNEQLQRVYGTAWADKKQLAAYIQRIEEAEKRDHRKIGKQLDLFHLQEEAPGMVFWHANGWTVYQVLEQYMRQVQRENGYSEIKTPQVVDRILWERSGHWSNYAENMFTTSSESRDYAVKPMNCPCHVQVFNQGLKSYRDLPLRLAEFGACHRNEPSGALHGIMRVRGFVQDDAHIFCTEDQVKKEAADFIKLTLDVYKDFGFTDVAMKLSTRPAKRVGSEELWDRAEGALADALNESGLEWEYQPGEGAFYGPKIEFTLRDCLGRNWQCGTLQYDPNLPERLDASYIAEDNARKRPVMLHRAILGSFERFIGMLIEHYAGVFPAWLAPTQAVIMNITDKQADFALQVEKSLNGSGFRAKSDLRNEKIGFKIREHTLLKVPYLLVIGDREVETQTVAVRTREGADLGSMPVAQFVELLTHAVSRRGRQESE</sequence>
<evidence type="ECO:0000255" key="1">
    <source>
        <dbReference type="HAMAP-Rule" id="MF_00184"/>
    </source>
</evidence>
<evidence type="ECO:0000255" key="2">
    <source>
        <dbReference type="PROSITE-ProRule" id="PRU01228"/>
    </source>
</evidence>
<proteinExistence type="inferred from homology"/>
<keyword id="KW-0030">Aminoacyl-tRNA synthetase</keyword>
<keyword id="KW-0067">ATP-binding</keyword>
<keyword id="KW-0963">Cytoplasm</keyword>
<keyword id="KW-0436">Ligase</keyword>
<keyword id="KW-0479">Metal-binding</keyword>
<keyword id="KW-0547">Nucleotide-binding</keyword>
<keyword id="KW-0648">Protein biosynthesis</keyword>
<keyword id="KW-0694">RNA-binding</keyword>
<keyword id="KW-0820">tRNA-binding</keyword>
<keyword id="KW-0862">Zinc</keyword>
<name>SYT_PSEPW</name>
<accession>B1J6U4</accession>
<comment type="function">
    <text evidence="1">Catalyzes the attachment of threonine to tRNA(Thr) in a two-step reaction: L-threonine is first activated by ATP to form Thr-AMP and then transferred to the acceptor end of tRNA(Thr). Also edits incorrectly charged L-seryl-tRNA(Thr).</text>
</comment>
<comment type="catalytic activity">
    <reaction evidence="1">
        <text>tRNA(Thr) + L-threonine + ATP = L-threonyl-tRNA(Thr) + AMP + diphosphate + H(+)</text>
        <dbReference type="Rhea" id="RHEA:24624"/>
        <dbReference type="Rhea" id="RHEA-COMP:9670"/>
        <dbReference type="Rhea" id="RHEA-COMP:9704"/>
        <dbReference type="ChEBI" id="CHEBI:15378"/>
        <dbReference type="ChEBI" id="CHEBI:30616"/>
        <dbReference type="ChEBI" id="CHEBI:33019"/>
        <dbReference type="ChEBI" id="CHEBI:57926"/>
        <dbReference type="ChEBI" id="CHEBI:78442"/>
        <dbReference type="ChEBI" id="CHEBI:78534"/>
        <dbReference type="ChEBI" id="CHEBI:456215"/>
        <dbReference type="EC" id="6.1.1.3"/>
    </reaction>
</comment>
<comment type="cofactor">
    <cofactor evidence="1">
        <name>Zn(2+)</name>
        <dbReference type="ChEBI" id="CHEBI:29105"/>
    </cofactor>
    <text evidence="1">Binds 1 zinc ion per subunit.</text>
</comment>
<comment type="subunit">
    <text evidence="1">Homodimer.</text>
</comment>
<comment type="subcellular location">
    <subcellularLocation>
        <location evidence="1">Cytoplasm</location>
    </subcellularLocation>
</comment>
<comment type="similarity">
    <text evidence="1">Belongs to the class-II aminoacyl-tRNA synthetase family.</text>
</comment>
<feature type="chain" id="PRO_1000098599" description="Threonine--tRNA ligase">
    <location>
        <begin position="1"/>
        <end position="640"/>
    </location>
</feature>
<feature type="domain" description="TGS" evidence="2">
    <location>
        <begin position="1"/>
        <end position="61"/>
    </location>
</feature>
<feature type="region of interest" description="Catalytic" evidence="1">
    <location>
        <begin position="242"/>
        <end position="533"/>
    </location>
</feature>
<feature type="binding site" evidence="1">
    <location>
        <position position="333"/>
    </location>
    <ligand>
        <name>Zn(2+)</name>
        <dbReference type="ChEBI" id="CHEBI:29105"/>
    </ligand>
</feature>
<feature type="binding site" evidence="1">
    <location>
        <position position="384"/>
    </location>
    <ligand>
        <name>Zn(2+)</name>
        <dbReference type="ChEBI" id="CHEBI:29105"/>
    </ligand>
</feature>
<feature type="binding site" evidence="1">
    <location>
        <position position="510"/>
    </location>
    <ligand>
        <name>Zn(2+)</name>
        <dbReference type="ChEBI" id="CHEBI:29105"/>
    </ligand>
</feature>
<protein>
    <recommendedName>
        <fullName evidence="1">Threonine--tRNA ligase</fullName>
        <ecNumber evidence="1">6.1.1.3</ecNumber>
    </recommendedName>
    <alternativeName>
        <fullName evidence="1">Threonyl-tRNA synthetase</fullName>
        <shortName evidence="1">ThrRS</shortName>
    </alternativeName>
</protein>
<dbReference type="EC" id="6.1.1.3" evidence="1"/>
<dbReference type="EMBL" id="CP000949">
    <property type="protein sequence ID" value="ACA72470.1"/>
    <property type="molecule type" value="Genomic_DNA"/>
</dbReference>
<dbReference type="SMR" id="B1J6U4"/>
<dbReference type="STRING" id="390235.PputW619_1967"/>
<dbReference type="KEGG" id="ppw:PputW619_1967"/>
<dbReference type="eggNOG" id="COG0441">
    <property type="taxonomic scope" value="Bacteria"/>
</dbReference>
<dbReference type="HOGENOM" id="CLU_008554_0_1_6"/>
<dbReference type="OrthoDB" id="9802304at2"/>
<dbReference type="GO" id="GO:0005829">
    <property type="term" value="C:cytosol"/>
    <property type="evidence" value="ECO:0007669"/>
    <property type="project" value="TreeGrafter"/>
</dbReference>
<dbReference type="GO" id="GO:0005524">
    <property type="term" value="F:ATP binding"/>
    <property type="evidence" value="ECO:0007669"/>
    <property type="project" value="UniProtKB-UniRule"/>
</dbReference>
<dbReference type="GO" id="GO:0046872">
    <property type="term" value="F:metal ion binding"/>
    <property type="evidence" value="ECO:0007669"/>
    <property type="project" value="UniProtKB-KW"/>
</dbReference>
<dbReference type="GO" id="GO:0004829">
    <property type="term" value="F:threonine-tRNA ligase activity"/>
    <property type="evidence" value="ECO:0007669"/>
    <property type="project" value="UniProtKB-UniRule"/>
</dbReference>
<dbReference type="GO" id="GO:0000049">
    <property type="term" value="F:tRNA binding"/>
    <property type="evidence" value="ECO:0007669"/>
    <property type="project" value="UniProtKB-KW"/>
</dbReference>
<dbReference type="GO" id="GO:0006435">
    <property type="term" value="P:threonyl-tRNA aminoacylation"/>
    <property type="evidence" value="ECO:0007669"/>
    <property type="project" value="UniProtKB-UniRule"/>
</dbReference>
<dbReference type="CDD" id="cd01667">
    <property type="entry name" value="TGS_ThrRS"/>
    <property type="match status" value="1"/>
</dbReference>
<dbReference type="CDD" id="cd00860">
    <property type="entry name" value="ThrRS_anticodon"/>
    <property type="match status" value="1"/>
</dbReference>
<dbReference type="CDD" id="cd00771">
    <property type="entry name" value="ThrRS_core"/>
    <property type="match status" value="1"/>
</dbReference>
<dbReference type="FunFam" id="3.10.20.30:FF:000005">
    <property type="entry name" value="Threonine--tRNA ligase"/>
    <property type="match status" value="1"/>
</dbReference>
<dbReference type="FunFam" id="3.30.54.20:FF:000002">
    <property type="entry name" value="Threonine--tRNA ligase"/>
    <property type="match status" value="1"/>
</dbReference>
<dbReference type="FunFam" id="3.30.930.10:FF:000002">
    <property type="entry name" value="Threonine--tRNA ligase"/>
    <property type="match status" value="1"/>
</dbReference>
<dbReference type="FunFam" id="3.40.50.800:FF:000001">
    <property type="entry name" value="Threonine--tRNA ligase"/>
    <property type="match status" value="1"/>
</dbReference>
<dbReference type="FunFam" id="3.30.980.10:FF:000005">
    <property type="entry name" value="Threonyl-tRNA synthetase, mitochondrial"/>
    <property type="match status" value="1"/>
</dbReference>
<dbReference type="Gene3D" id="3.10.20.30">
    <property type="match status" value="1"/>
</dbReference>
<dbReference type="Gene3D" id="3.30.54.20">
    <property type="match status" value="1"/>
</dbReference>
<dbReference type="Gene3D" id="3.40.50.800">
    <property type="entry name" value="Anticodon-binding domain"/>
    <property type="match status" value="1"/>
</dbReference>
<dbReference type="Gene3D" id="3.30.930.10">
    <property type="entry name" value="Bira Bifunctional Protein, Domain 2"/>
    <property type="match status" value="1"/>
</dbReference>
<dbReference type="Gene3D" id="3.30.980.10">
    <property type="entry name" value="Threonyl-trna Synthetase, Chain A, domain 2"/>
    <property type="match status" value="1"/>
</dbReference>
<dbReference type="HAMAP" id="MF_00184">
    <property type="entry name" value="Thr_tRNA_synth"/>
    <property type="match status" value="1"/>
</dbReference>
<dbReference type="InterPro" id="IPR002314">
    <property type="entry name" value="aa-tRNA-synt_IIb"/>
</dbReference>
<dbReference type="InterPro" id="IPR006195">
    <property type="entry name" value="aa-tRNA-synth_II"/>
</dbReference>
<dbReference type="InterPro" id="IPR045864">
    <property type="entry name" value="aa-tRNA-synth_II/BPL/LPL"/>
</dbReference>
<dbReference type="InterPro" id="IPR004154">
    <property type="entry name" value="Anticodon-bd"/>
</dbReference>
<dbReference type="InterPro" id="IPR036621">
    <property type="entry name" value="Anticodon-bd_dom_sf"/>
</dbReference>
<dbReference type="InterPro" id="IPR012675">
    <property type="entry name" value="Beta-grasp_dom_sf"/>
</dbReference>
<dbReference type="InterPro" id="IPR004095">
    <property type="entry name" value="TGS"/>
</dbReference>
<dbReference type="InterPro" id="IPR012676">
    <property type="entry name" value="TGS-like"/>
</dbReference>
<dbReference type="InterPro" id="IPR002320">
    <property type="entry name" value="Thr-tRNA-ligase_IIa"/>
</dbReference>
<dbReference type="InterPro" id="IPR018163">
    <property type="entry name" value="Thr/Ala-tRNA-synth_IIc_edit"/>
</dbReference>
<dbReference type="InterPro" id="IPR047246">
    <property type="entry name" value="ThrRS_anticodon"/>
</dbReference>
<dbReference type="InterPro" id="IPR033728">
    <property type="entry name" value="ThrRS_core"/>
</dbReference>
<dbReference type="InterPro" id="IPR012947">
    <property type="entry name" value="tRNA_SAD"/>
</dbReference>
<dbReference type="NCBIfam" id="TIGR00418">
    <property type="entry name" value="thrS"/>
    <property type="match status" value="1"/>
</dbReference>
<dbReference type="PANTHER" id="PTHR11451:SF44">
    <property type="entry name" value="THREONINE--TRNA LIGASE, CHLOROPLASTIC_MITOCHONDRIAL 2"/>
    <property type="match status" value="1"/>
</dbReference>
<dbReference type="PANTHER" id="PTHR11451">
    <property type="entry name" value="THREONINE-TRNA LIGASE"/>
    <property type="match status" value="1"/>
</dbReference>
<dbReference type="Pfam" id="PF03129">
    <property type="entry name" value="HGTP_anticodon"/>
    <property type="match status" value="1"/>
</dbReference>
<dbReference type="Pfam" id="PF02824">
    <property type="entry name" value="TGS"/>
    <property type="match status" value="1"/>
</dbReference>
<dbReference type="Pfam" id="PF00587">
    <property type="entry name" value="tRNA-synt_2b"/>
    <property type="match status" value="1"/>
</dbReference>
<dbReference type="Pfam" id="PF07973">
    <property type="entry name" value="tRNA_SAD"/>
    <property type="match status" value="1"/>
</dbReference>
<dbReference type="PRINTS" id="PR01047">
    <property type="entry name" value="TRNASYNTHTHR"/>
</dbReference>
<dbReference type="SMART" id="SM00863">
    <property type="entry name" value="tRNA_SAD"/>
    <property type="match status" value="1"/>
</dbReference>
<dbReference type="SUPFAM" id="SSF52954">
    <property type="entry name" value="Class II aaRS ABD-related"/>
    <property type="match status" value="1"/>
</dbReference>
<dbReference type="SUPFAM" id="SSF55681">
    <property type="entry name" value="Class II aaRS and biotin synthetases"/>
    <property type="match status" value="1"/>
</dbReference>
<dbReference type="SUPFAM" id="SSF81271">
    <property type="entry name" value="TGS-like"/>
    <property type="match status" value="1"/>
</dbReference>
<dbReference type="SUPFAM" id="SSF55186">
    <property type="entry name" value="ThrRS/AlaRS common domain"/>
    <property type="match status" value="1"/>
</dbReference>
<dbReference type="PROSITE" id="PS50862">
    <property type="entry name" value="AA_TRNA_LIGASE_II"/>
    <property type="match status" value="1"/>
</dbReference>
<dbReference type="PROSITE" id="PS51880">
    <property type="entry name" value="TGS"/>
    <property type="match status" value="1"/>
</dbReference>
<organism>
    <name type="scientific">Pseudomonas putida (strain W619)</name>
    <dbReference type="NCBI Taxonomy" id="390235"/>
    <lineage>
        <taxon>Bacteria</taxon>
        <taxon>Pseudomonadati</taxon>
        <taxon>Pseudomonadota</taxon>
        <taxon>Gammaproteobacteria</taxon>
        <taxon>Pseudomonadales</taxon>
        <taxon>Pseudomonadaceae</taxon>
        <taxon>Pseudomonas</taxon>
    </lineage>
</organism>